<evidence type="ECO:0000255" key="1">
    <source>
        <dbReference type="HAMAP-Rule" id="MF_00568"/>
    </source>
</evidence>
<keyword id="KW-0004">4Fe-4S</keyword>
<keyword id="KW-0963">Cytoplasm</keyword>
<keyword id="KW-0408">Iron</keyword>
<keyword id="KW-0411">Iron-sulfur</keyword>
<keyword id="KW-0479">Metal-binding</keyword>
<keyword id="KW-0662">Pyridine nucleotide biosynthesis</keyword>
<keyword id="KW-1185">Reference proteome</keyword>
<keyword id="KW-0808">Transferase</keyword>
<proteinExistence type="inferred from homology"/>
<feature type="chain" id="PRO_1000061147" description="Quinolinate synthase">
    <location>
        <begin position="1"/>
        <end position="303"/>
    </location>
</feature>
<feature type="binding site" evidence="1">
    <location>
        <position position="24"/>
    </location>
    <ligand>
        <name>iminosuccinate</name>
        <dbReference type="ChEBI" id="CHEBI:77875"/>
    </ligand>
</feature>
<feature type="binding site" evidence="1">
    <location>
        <position position="41"/>
    </location>
    <ligand>
        <name>iminosuccinate</name>
        <dbReference type="ChEBI" id="CHEBI:77875"/>
    </ligand>
</feature>
<feature type="binding site" evidence="1">
    <location>
        <position position="86"/>
    </location>
    <ligand>
        <name>[4Fe-4S] cluster</name>
        <dbReference type="ChEBI" id="CHEBI:49883"/>
    </ligand>
</feature>
<feature type="binding site" evidence="1">
    <location>
        <begin position="112"/>
        <end position="114"/>
    </location>
    <ligand>
        <name>iminosuccinate</name>
        <dbReference type="ChEBI" id="CHEBI:77875"/>
    </ligand>
</feature>
<feature type="binding site" evidence="1">
    <location>
        <position position="129"/>
    </location>
    <ligand>
        <name>iminosuccinate</name>
        <dbReference type="ChEBI" id="CHEBI:77875"/>
    </ligand>
</feature>
<feature type="binding site" evidence="1">
    <location>
        <position position="172"/>
    </location>
    <ligand>
        <name>[4Fe-4S] cluster</name>
        <dbReference type="ChEBI" id="CHEBI:49883"/>
    </ligand>
</feature>
<feature type="binding site" evidence="1">
    <location>
        <begin position="198"/>
        <end position="200"/>
    </location>
    <ligand>
        <name>iminosuccinate</name>
        <dbReference type="ChEBI" id="CHEBI:77875"/>
    </ligand>
</feature>
<feature type="binding site" evidence="1">
    <location>
        <position position="215"/>
    </location>
    <ligand>
        <name>iminosuccinate</name>
        <dbReference type="ChEBI" id="CHEBI:77875"/>
    </ligand>
</feature>
<feature type="binding site" evidence="1">
    <location>
        <position position="260"/>
    </location>
    <ligand>
        <name>[4Fe-4S] cluster</name>
        <dbReference type="ChEBI" id="CHEBI:49883"/>
    </ligand>
</feature>
<dbReference type="EC" id="2.5.1.72" evidence="1"/>
<dbReference type="EMBL" id="CP000724">
    <property type="protein sequence ID" value="ABR46260.1"/>
    <property type="molecule type" value="Genomic_DNA"/>
</dbReference>
<dbReference type="RefSeq" id="WP_011971169.1">
    <property type="nucleotide sequence ID" value="NC_009633.1"/>
</dbReference>
<dbReference type="SMR" id="A6TJ92"/>
<dbReference type="STRING" id="293826.Amet_0017"/>
<dbReference type="KEGG" id="amt:Amet_0017"/>
<dbReference type="eggNOG" id="COG0379">
    <property type="taxonomic scope" value="Bacteria"/>
</dbReference>
<dbReference type="HOGENOM" id="CLU_047382_0_0_9"/>
<dbReference type="OrthoDB" id="9801204at2"/>
<dbReference type="UniPathway" id="UPA00253">
    <property type="reaction ID" value="UER00327"/>
</dbReference>
<dbReference type="Proteomes" id="UP000001572">
    <property type="component" value="Chromosome"/>
</dbReference>
<dbReference type="GO" id="GO:0005737">
    <property type="term" value="C:cytoplasm"/>
    <property type="evidence" value="ECO:0007669"/>
    <property type="project" value="UniProtKB-SubCell"/>
</dbReference>
<dbReference type="GO" id="GO:0051539">
    <property type="term" value="F:4 iron, 4 sulfur cluster binding"/>
    <property type="evidence" value="ECO:0007669"/>
    <property type="project" value="UniProtKB-KW"/>
</dbReference>
<dbReference type="GO" id="GO:0046872">
    <property type="term" value="F:metal ion binding"/>
    <property type="evidence" value="ECO:0007669"/>
    <property type="project" value="UniProtKB-KW"/>
</dbReference>
<dbReference type="GO" id="GO:0008987">
    <property type="term" value="F:quinolinate synthetase A activity"/>
    <property type="evidence" value="ECO:0007669"/>
    <property type="project" value="UniProtKB-UniRule"/>
</dbReference>
<dbReference type="GO" id="GO:0034628">
    <property type="term" value="P:'de novo' NAD biosynthetic process from L-aspartate"/>
    <property type="evidence" value="ECO:0007669"/>
    <property type="project" value="TreeGrafter"/>
</dbReference>
<dbReference type="FunFam" id="3.40.50.10800:FF:000001">
    <property type="entry name" value="Quinolinate synthase A"/>
    <property type="match status" value="1"/>
</dbReference>
<dbReference type="FunFam" id="3.40.50.10800:FF:000003">
    <property type="entry name" value="Quinolinate synthase A"/>
    <property type="match status" value="1"/>
</dbReference>
<dbReference type="Gene3D" id="3.40.50.10800">
    <property type="entry name" value="NadA-like"/>
    <property type="match status" value="3"/>
</dbReference>
<dbReference type="HAMAP" id="MF_00568">
    <property type="entry name" value="NadA_type2"/>
    <property type="match status" value="1"/>
</dbReference>
<dbReference type="InterPro" id="IPR003473">
    <property type="entry name" value="NadA"/>
</dbReference>
<dbReference type="InterPro" id="IPR036094">
    <property type="entry name" value="NadA_sf"/>
</dbReference>
<dbReference type="InterPro" id="IPR023066">
    <property type="entry name" value="Quinolinate_synth_type2"/>
</dbReference>
<dbReference type="NCBIfam" id="TIGR00550">
    <property type="entry name" value="nadA"/>
    <property type="match status" value="1"/>
</dbReference>
<dbReference type="NCBIfam" id="NF006878">
    <property type="entry name" value="PRK09375.1-2"/>
    <property type="match status" value="1"/>
</dbReference>
<dbReference type="NCBIfam" id="NF006879">
    <property type="entry name" value="PRK09375.1-4"/>
    <property type="match status" value="1"/>
</dbReference>
<dbReference type="PANTHER" id="PTHR30573:SF0">
    <property type="entry name" value="QUINOLINATE SYNTHASE, CHLOROPLASTIC"/>
    <property type="match status" value="1"/>
</dbReference>
<dbReference type="PANTHER" id="PTHR30573">
    <property type="entry name" value="QUINOLINATE SYNTHETASE A"/>
    <property type="match status" value="1"/>
</dbReference>
<dbReference type="Pfam" id="PF02445">
    <property type="entry name" value="NadA"/>
    <property type="match status" value="1"/>
</dbReference>
<dbReference type="SUPFAM" id="SSF142754">
    <property type="entry name" value="NadA-like"/>
    <property type="match status" value="1"/>
</dbReference>
<comment type="function">
    <text evidence="1">Catalyzes the condensation of iminoaspartate with dihydroxyacetone phosphate to form quinolinate.</text>
</comment>
<comment type="catalytic activity">
    <reaction evidence="1">
        <text>iminosuccinate + dihydroxyacetone phosphate = quinolinate + phosphate + 2 H2O + H(+)</text>
        <dbReference type="Rhea" id="RHEA:25888"/>
        <dbReference type="ChEBI" id="CHEBI:15377"/>
        <dbReference type="ChEBI" id="CHEBI:15378"/>
        <dbReference type="ChEBI" id="CHEBI:29959"/>
        <dbReference type="ChEBI" id="CHEBI:43474"/>
        <dbReference type="ChEBI" id="CHEBI:57642"/>
        <dbReference type="ChEBI" id="CHEBI:77875"/>
        <dbReference type="EC" id="2.5.1.72"/>
    </reaction>
    <physiologicalReaction direction="left-to-right" evidence="1">
        <dbReference type="Rhea" id="RHEA:25889"/>
    </physiologicalReaction>
</comment>
<comment type="cofactor">
    <cofactor evidence="1">
        <name>[4Fe-4S] cluster</name>
        <dbReference type="ChEBI" id="CHEBI:49883"/>
    </cofactor>
    <text evidence="1">Binds 1 [4Fe-4S] cluster per subunit.</text>
</comment>
<comment type="pathway">
    <text evidence="1">Cofactor biosynthesis; NAD(+) biosynthesis; quinolinate from iminoaspartate: step 1/1.</text>
</comment>
<comment type="subcellular location">
    <subcellularLocation>
        <location evidence="1">Cytoplasm</location>
    </subcellularLocation>
</comment>
<comment type="similarity">
    <text evidence="1">Belongs to the quinolinate synthase family. Type 2 subfamily.</text>
</comment>
<accession>A6TJ92</accession>
<sequence length="303" mass="34176">MNETNMIDEIKRLKKEKNAVILAHNYQIPEIQEIADIVGDSLKLSQEATKTDADIVVLSGVKFMAESVKILSPNKKVLLPAHDAGCPMADMIDVDQLKEFKAEYPNVPVVCYVNSSAEVKAESDICCTSSNAIKVVRSLQSDKVIFVPDQNLAAYIAEQVPEKEIIPWQGFCITHHRVKDLEVDKIRKQMPEAVFLVHPECTPDVVKKADFVGSTSQIIQYAKESNAEKFVIGTEMGVLHKLKKENPTKKFYLLSPGLICFNMKKTTLVNVYEALRDEQHEIIVDEYVREKALKTLNQMLEIK</sequence>
<gene>
    <name evidence="1" type="primary">nadA</name>
    <name type="ordered locus">Amet_0017</name>
</gene>
<organism>
    <name type="scientific">Alkaliphilus metalliredigens (strain QYMF)</name>
    <dbReference type="NCBI Taxonomy" id="293826"/>
    <lineage>
        <taxon>Bacteria</taxon>
        <taxon>Bacillati</taxon>
        <taxon>Bacillota</taxon>
        <taxon>Clostridia</taxon>
        <taxon>Peptostreptococcales</taxon>
        <taxon>Natronincolaceae</taxon>
        <taxon>Alkaliphilus</taxon>
    </lineage>
</organism>
<name>NADA_ALKMQ</name>
<reference key="1">
    <citation type="journal article" date="2016" name="Genome Announc.">
        <title>Complete genome sequence of Alkaliphilus metalliredigens strain QYMF, an alkaliphilic and metal-reducing bacterium isolated from borax-contaminated leachate ponds.</title>
        <authorList>
            <person name="Hwang C."/>
            <person name="Copeland A."/>
            <person name="Lucas S."/>
            <person name="Lapidus A."/>
            <person name="Barry K."/>
            <person name="Detter J.C."/>
            <person name="Glavina Del Rio T."/>
            <person name="Hammon N."/>
            <person name="Israni S."/>
            <person name="Dalin E."/>
            <person name="Tice H."/>
            <person name="Pitluck S."/>
            <person name="Chertkov O."/>
            <person name="Brettin T."/>
            <person name="Bruce D."/>
            <person name="Han C."/>
            <person name="Schmutz J."/>
            <person name="Larimer F."/>
            <person name="Land M.L."/>
            <person name="Hauser L."/>
            <person name="Kyrpides N."/>
            <person name="Mikhailova N."/>
            <person name="Ye Q."/>
            <person name="Zhou J."/>
            <person name="Richardson P."/>
            <person name="Fields M.W."/>
        </authorList>
    </citation>
    <scope>NUCLEOTIDE SEQUENCE [LARGE SCALE GENOMIC DNA]</scope>
    <source>
        <strain>QYMF</strain>
    </source>
</reference>
<protein>
    <recommendedName>
        <fullName evidence="1">Quinolinate synthase</fullName>
        <ecNumber evidence="1">2.5.1.72</ecNumber>
    </recommendedName>
</protein>